<feature type="chain" id="PRO_0000152769" description="Lysine--tRNA ligase">
    <location>
        <begin position="1"/>
        <end position="588"/>
    </location>
</feature>
<feature type="region of interest" description="Disordered" evidence="1">
    <location>
        <begin position="1"/>
        <end position="54"/>
    </location>
</feature>
<feature type="compositionally biased region" description="Polar residues" evidence="1">
    <location>
        <begin position="1"/>
        <end position="10"/>
    </location>
</feature>
<feature type="compositionally biased region" description="Basic and acidic residues" evidence="1">
    <location>
        <begin position="20"/>
        <end position="47"/>
    </location>
</feature>
<proteinExistence type="evidence at transcript level"/>
<reference key="1">
    <citation type="journal article" date="1997" name="Eur. J. Biochem.">
        <title>A root-specific iron-regulated gene of tomato encodes a lysyl-tRNA-synthetase-like protein.</title>
        <authorList>
            <person name="Giritch A."/>
            <person name="Herbik A."/>
            <person name="Balzer H.-J."/>
            <person name="Ganal M."/>
            <person name="Stephan U.W."/>
            <person name="Baumlein H."/>
        </authorList>
    </citation>
    <scope>NUCLEOTIDE SEQUENCE [MRNA]</scope>
    <source>
        <strain>cv. Bonner Beste</strain>
        <tissue>Root</tissue>
    </source>
</reference>
<evidence type="ECO:0000256" key="1">
    <source>
        <dbReference type="SAM" id="MobiDB-lite"/>
    </source>
</evidence>
<evidence type="ECO:0000305" key="2"/>
<protein>
    <recommendedName>
        <fullName>Lysine--tRNA ligase</fullName>
        <ecNumber>6.1.1.6</ecNumber>
    </recommendedName>
    <alternativeName>
        <fullName>Lysyl-tRNA synthetase</fullName>
        <shortName>LysRS</shortName>
    </alternativeName>
</protein>
<name>SYK_SOLLC</name>
<sequence length="588" mass="67116">MDSSVSTEPLSKNALKREKKAKEKEQLEQEKKAAAVAKRQMEQHNLPENDDLDPTQYLANRLRNIESLRESGINPYPHKFFITMSIPEFISRYAHLNTGEFPEDIDMSLAGRVISKRASSSKLYFYELLGGGARVQVLASARDSDVDAVQFSNYQSGVKRGDIIGVRGYPGKSKRGELSIFAKPFIVLAPCLHMLPRRLTSSIVDETRTQNFQGITAYDTWTPGDLRNPESYVLRDQETRYRQRYLDLMMNPEVRALFRTRARIISYIRSFLDNLEFLEVETPSMNLTAGGASARPFITHHNELDTELLIRVSPELYLKKLVVGGFDRVYELGKHFRNEGMDLTHSPEFTMCELYMAYADYNDLMDLTEQLLSGMVKDLTGSYKIRYHANGLDNEPIEIDFTPPFRKIDMLSELEKVANISIPRDLSSESANKHLVDVCEKFDVKCPPPHTTTRLLDKLVGHFIEVNCINPTFIINHPEIMSPLAKSRRSEPGLTERFNLFVNRRELCDAYTELNDPTAQRERFAEQLKDRQLGDDEAMDLDESFITALEYGLPPTGGLGMGIDRLTMLLTDSQNVKEVILFPAMRLQ</sequence>
<dbReference type="EC" id="6.1.1.6"/>
<dbReference type="EMBL" id="X94451">
    <property type="protein sequence ID" value="CAA64223.1"/>
    <property type="molecule type" value="mRNA"/>
</dbReference>
<dbReference type="PIR" id="T07085">
    <property type="entry name" value="T07085"/>
</dbReference>
<dbReference type="RefSeq" id="NP_001234285.1">
    <property type="nucleotide sequence ID" value="NM_001247356.1"/>
</dbReference>
<dbReference type="SMR" id="Q43776"/>
<dbReference type="STRING" id="4081.Q43776"/>
<dbReference type="PaxDb" id="4081-Solyc10g076610.1.1"/>
<dbReference type="GeneID" id="778357"/>
<dbReference type="KEGG" id="sly:778357"/>
<dbReference type="eggNOG" id="KOG1885">
    <property type="taxonomic scope" value="Eukaryota"/>
</dbReference>
<dbReference type="InParanoid" id="Q43776"/>
<dbReference type="OrthoDB" id="21243at2759"/>
<dbReference type="Proteomes" id="UP000004994">
    <property type="component" value="Unplaced"/>
</dbReference>
<dbReference type="ExpressionAtlas" id="Q43776">
    <property type="expression patterns" value="baseline and differential"/>
</dbReference>
<dbReference type="GO" id="GO:0005737">
    <property type="term" value="C:cytoplasm"/>
    <property type="evidence" value="ECO:0000318"/>
    <property type="project" value="GO_Central"/>
</dbReference>
<dbReference type="GO" id="GO:0005524">
    <property type="term" value="F:ATP binding"/>
    <property type="evidence" value="ECO:0007669"/>
    <property type="project" value="UniProtKB-KW"/>
</dbReference>
<dbReference type="GO" id="GO:0004824">
    <property type="term" value="F:lysine-tRNA ligase activity"/>
    <property type="evidence" value="ECO:0000318"/>
    <property type="project" value="GO_Central"/>
</dbReference>
<dbReference type="GO" id="GO:0000049">
    <property type="term" value="F:tRNA binding"/>
    <property type="evidence" value="ECO:0000318"/>
    <property type="project" value="GO_Central"/>
</dbReference>
<dbReference type="GO" id="GO:0006430">
    <property type="term" value="P:lysyl-tRNA aminoacylation"/>
    <property type="evidence" value="ECO:0000318"/>
    <property type="project" value="GO_Central"/>
</dbReference>
<dbReference type="CDD" id="cd00775">
    <property type="entry name" value="LysRS_core"/>
    <property type="match status" value="1"/>
</dbReference>
<dbReference type="CDD" id="cd04322">
    <property type="entry name" value="LysRS_N"/>
    <property type="match status" value="1"/>
</dbReference>
<dbReference type="FunFam" id="2.40.50.140:FF:000050">
    <property type="entry name" value="Lysine--tRNA ligase"/>
    <property type="match status" value="1"/>
</dbReference>
<dbReference type="FunFam" id="3.30.930.10:FF:000238">
    <property type="entry name" value="Lysine--tRNA ligase"/>
    <property type="match status" value="1"/>
</dbReference>
<dbReference type="Gene3D" id="3.30.930.10">
    <property type="entry name" value="Bira Bifunctional Protein, Domain 2"/>
    <property type="match status" value="1"/>
</dbReference>
<dbReference type="Gene3D" id="2.40.50.140">
    <property type="entry name" value="Nucleic acid-binding proteins"/>
    <property type="match status" value="1"/>
</dbReference>
<dbReference type="HAMAP" id="MF_00252">
    <property type="entry name" value="Lys_tRNA_synth_class2"/>
    <property type="match status" value="1"/>
</dbReference>
<dbReference type="InterPro" id="IPR004364">
    <property type="entry name" value="Aa-tRNA-synt_II"/>
</dbReference>
<dbReference type="InterPro" id="IPR006195">
    <property type="entry name" value="aa-tRNA-synth_II"/>
</dbReference>
<dbReference type="InterPro" id="IPR045864">
    <property type="entry name" value="aa-tRNA-synth_II/BPL/LPL"/>
</dbReference>
<dbReference type="InterPro" id="IPR002313">
    <property type="entry name" value="Lys-tRNA-ligase_II"/>
</dbReference>
<dbReference type="InterPro" id="IPR034762">
    <property type="entry name" value="Lys-tRNA-ligase_II_bac/euk"/>
</dbReference>
<dbReference type="InterPro" id="IPR044136">
    <property type="entry name" value="Lys-tRNA-ligase_II_N"/>
</dbReference>
<dbReference type="InterPro" id="IPR018149">
    <property type="entry name" value="Lys-tRNA-synth_II_C"/>
</dbReference>
<dbReference type="InterPro" id="IPR012340">
    <property type="entry name" value="NA-bd_OB-fold"/>
</dbReference>
<dbReference type="InterPro" id="IPR004365">
    <property type="entry name" value="NA-bd_OB_tRNA"/>
</dbReference>
<dbReference type="NCBIfam" id="TIGR00499">
    <property type="entry name" value="lysS_bact"/>
    <property type="match status" value="1"/>
</dbReference>
<dbReference type="NCBIfam" id="NF001756">
    <property type="entry name" value="PRK00484.1"/>
    <property type="match status" value="1"/>
</dbReference>
<dbReference type="PANTHER" id="PTHR42918:SF12">
    <property type="entry name" value="LYSINE--TRNA LIGASE"/>
    <property type="match status" value="1"/>
</dbReference>
<dbReference type="PANTHER" id="PTHR42918">
    <property type="entry name" value="LYSYL-TRNA SYNTHETASE"/>
    <property type="match status" value="1"/>
</dbReference>
<dbReference type="Pfam" id="PF00152">
    <property type="entry name" value="tRNA-synt_2"/>
    <property type="match status" value="1"/>
</dbReference>
<dbReference type="Pfam" id="PF01336">
    <property type="entry name" value="tRNA_anti-codon"/>
    <property type="match status" value="1"/>
</dbReference>
<dbReference type="PIRSF" id="PIRSF039101">
    <property type="entry name" value="LysRS2"/>
    <property type="match status" value="1"/>
</dbReference>
<dbReference type="PRINTS" id="PR00982">
    <property type="entry name" value="TRNASYNTHLYS"/>
</dbReference>
<dbReference type="SUPFAM" id="SSF55681">
    <property type="entry name" value="Class II aaRS and biotin synthetases"/>
    <property type="match status" value="1"/>
</dbReference>
<dbReference type="SUPFAM" id="SSF50249">
    <property type="entry name" value="Nucleic acid-binding proteins"/>
    <property type="match status" value="1"/>
</dbReference>
<dbReference type="PROSITE" id="PS50862">
    <property type="entry name" value="AA_TRNA_LIGASE_II"/>
    <property type="match status" value="1"/>
</dbReference>
<gene>
    <name type="primary">LYSRS</name>
</gene>
<accession>Q43776</accession>
<keyword id="KW-0030">Aminoacyl-tRNA synthetase</keyword>
<keyword id="KW-0067">ATP-binding</keyword>
<keyword id="KW-0963">Cytoplasm</keyword>
<keyword id="KW-0436">Ligase</keyword>
<keyword id="KW-0547">Nucleotide-binding</keyword>
<keyword id="KW-0648">Protein biosynthesis</keyword>
<keyword id="KW-1185">Reference proteome</keyword>
<comment type="catalytic activity">
    <reaction>
        <text>tRNA(Lys) + L-lysine + ATP = L-lysyl-tRNA(Lys) + AMP + diphosphate</text>
        <dbReference type="Rhea" id="RHEA:20792"/>
        <dbReference type="Rhea" id="RHEA-COMP:9696"/>
        <dbReference type="Rhea" id="RHEA-COMP:9697"/>
        <dbReference type="ChEBI" id="CHEBI:30616"/>
        <dbReference type="ChEBI" id="CHEBI:32551"/>
        <dbReference type="ChEBI" id="CHEBI:33019"/>
        <dbReference type="ChEBI" id="CHEBI:78442"/>
        <dbReference type="ChEBI" id="CHEBI:78529"/>
        <dbReference type="ChEBI" id="CHEBI:456215"/>
        <dbReference type="EC" id="6.1.1.6"/>
    </reaction>
</comment>
<comment type="subcellular location">
    <subcellularLocation>
        <location>Cytoplasm</location>
    </subcellularLocation>
</comment>
<comment type="similarity">
    <text evidence="2">Belongs to the class-II aminoacyl-tRNA synthetase family.</text>
</comment>
<organism>
    <name type="scientific">Solanum lycopersicum</name>
    <name type="common">Tomato</name>
    <name type="synonym">Lycopersicon esculentum</name>
    <dbReference type="NCBI Taxonomy" id="4081"/>
    <lineage>
        <taxon>Eukaryota</taxon>
        <taxon>Viridiplantae</taxon>
        <taxon>Streptophyta</taxon>
        <taxon>Embryophyta</taxon>
        <taxon>Tracheophyta</taxon>
        <taxon>Spermatophyta</taxon>
        <taxon>Magnoliopsida</taxon>
        <taxon>eudicotyledons</taxon>
        <taxon>Gunneridae</taxon>
        <taxon>Pentapetalae</taxon>
        <taxon>asterids</taxon>
        <taxon>lamiids</taxon>
        <taxon>Solanales</taxon>
        <taxon>Solanaceae</taxon>
        <taxon>Solanoideae</taxon>
        <taxon>Solaneae</taxon>
        <taxon>Solanum</taxon>
        <taxon>Solanum subgen. Lycopersicon</taxon>
    </lineage>
</organism>